<dbReference type="EC" id="3.6.4.-" evidence="4 9"/>
<dbReference type="EMBL" id="X03854">
    <property type="protein sequence ID" value="CAA27485.1"/>
    <property type="molecule type" value="Genomic_RNA"/>
</dbReference>
<dbReference type="PIR" id="A04191">
    <property type="entry name" value="WMBV8B"/>
</dbReference>
<dbReference type="RefSeq" id="NP_604487.1">
    <property type="nucleotide sequence ID" value="NC_003481.1"/>
</dbReference>
<dbReference type="SMR" id="P04867"/>
<dbReference type="GeneID" id="962677"/>
<dbReference type="KEGG" id="vg:962677"/>
<dbReference type="OrthoDB" id="7859at10239"/>
<dbReference type="Proteomes" id="UP000001667">
    <property type="component" value="Genome"/>
</dbReference>
<dbReference type="GO" id="GO:0030430">
    <property type="term" value="C:host cell cytoplasm"/>
    <property type="evidence" value="ECO:0007669"/>
    <property type="project" value="UniProtKB-SubCell"/>
</dbReference>
<dbReference type="GO" id="GO:0044196">
    <property type="term" value="C:host cell nucleolus"/>
    <property type="evidence" value="ECO:0007669"/>
    <property type="project" value="UniProtKB-SubCell"/>
</dbReference>
<dbReference type="GO" id="GO:0044219">
    <property type="term" value="C:host cell plasmodesma"/>
    <property type="evidence" value="ECO:0007669"/>
    <property type="project" value="UniProtKB-SubCell"/>
</dbReference>
<dbReference type="GO" id="GO:0044163">
    <property type="term" value="C:host cytoskeleton"/>
    <property type="evidence" value="ECO:0007669"/>
    <property type="project" value="UniProtKB-SubCell"/>
</dbReference>
<dbReference type="GO" id="GO:0005524">
    <property type="term" value="F:ATP binding"/>
    <property type="evidence" value="ECO:0007669"/>
    <property type="project" value="UniProtKB-KW"/>
</dbReference>
<dbReference type="GO" id="GO:0016887">
    <property type="term" value="F:ATP hydrolysis activity"/>
    <property type="evidence" value="ECO:0000314"/>
    <property type="project" value="UniProtKB"/>
</dbReference>
<dbReference type="GO" id="GO:0004386">
    <property type="term" value="F:helicase activity"/>
    <property type="evidence" value="ECO:0007669"/>
    <property type="project" value="UniProtKB-KW"/>
</dbReference>
<dbReference type="GO" id="GO:0003723">
    <property type="term" value="F:RNA binding"/>
    <property type="evidence" value="ECO:0007669"/>
    <property type="project" value="UniProtKB-KW"/>
</dbReference>
<dbReference type="GO" id="GO:0046740">
    <property type="term" value="P:transport of virus in host, cell to cell"/>
    <property type="evidence" value="ECO:0007669"/>
    <property type="project" value="UniProtKB-KW"/>
</dbReference>
<dbReference type="Gene3D" id="3.40.50.300">
    <property type="entry name" value="P-loop containing nucleotide triphosphate hydrolases"/>
    <property type="match status" value="2"/>
</dbReference>
<dbReference type="InterPro" id="IPR027351">
    <property type="entry name" value="(+)RNA_virus_helicase_core_dom"/>
</dbReference>
<dbReference type="InterPro" id="IPR003593">
    <property type="entry name" value="AAA+_ATPase"/>
</dbReference>
<dbReference type="InterPro" id="IPR027417">
    <property type="entry name" value="P-loop_NTPase"/>
</dbReference>
<dbReference type="Pfam" id="PF01443">
    <property type="entry name" value="Viral_helicase1"/>
    <property type="match status" value="1"/>
</dbReference>
<dbReference type="SMART" id="SM00382">
    <property type="entry name" value="AAA"/>
    <property type="match status" value="1"/>
</dbReference>
<dbReference type="SUPFAM" id="SSF52540">
    <property type="entry name" value="P-loop containing nucleoside triphosphate hydrolases"/>
    <property type="match status" value="1"/>
</dbReference>
<dbReference type="PROSITE" id="PS51657">
    <property type="entry name" value="PSRV_HELICASE"/>
    <property type="match status" value="1"/>
</dbReference>
<comment type="function">
    <text evidence="1 4 5 8 9">Participates in the transport of viral genome to neighboring plant cells directly through plasmodesmata, without any budding (PubMed:18353960). Multifunctional movement protein with RNA-binding, ATPase and helicase activities (PubMed:12069530, PubMed:8995680). Engages in homologous interactions leading to the formation of a ribonucleoprotein complex containing plus-sense viral RNAs (vRNPs) (PubMed:18353960). ATPase activity is probably required for vRNPs movement complex assembly (PubMed:32730331). Intracellular delivery of TGBp1-containing vRNPs to plasmodesmata is facilitated by TGBp2 and TGBp3 (By similarity).</text>
</comment>
<comment type="catalytic activity">
    <reaction evidence="4 9">
        <text>ATP + H2O = ADP + phosphate + H(+)</text>
        <dbReference type="Rhea" id="RHEA:13065"/>
        <dbReference type="ChEBI" id="CHEBI:15377"/>
        <dbReference type="ChEBI" id="CHEBI:15378"/>
        <dbReference type="ChEBI" id="CHEBI:30616"/>
        <dbReference type="ChEBI" id="CHEBI:43474"/>
        <dbReference type="ChEBI" id="CHEBI:456216"/>
    </reaction>
</comment>
<comment type="cofactor">
    <cofactor evidence="4">
        <name>Mg(2+)</name>
        <dbReference type="ChEBI" id="CHEBI:18420"/>
    </cofactor>
</comment>
<comment type="activity regulation">
    <text evidence="8">ATPase activity is enhanced by the suppressor of RNA silencing Gamma-B.</text>
</comment>
<comment type="subunit">
    <text evidence="5 6 8">Homooligomer (PubMed:19570874). Interacts with movement protein TGB3 (PubMed:18353960). TGB1-TGB3-TGB2 complex formation is enhanced by ATP hydrolysis (PubMed:32730331). Interacts with the suppressor of RNA silencing Gamma-B (via N-terminus) (PubMed:32730331).</text>
</comment>
<comment type="subcellular location">
    <subcellularLocation>
        <location evidence="6">Host cell junction</location>
        <location evidence="6">Host plasmodesma</location>
    </subcellularLocation>
    <subcellularLocation>
        <location evidence="7">Host nucleus</location>
    </subcellularLocation>
    <subcellularLocation>
        <location evidence="7">Host cytoplasm</location>
    </subcellularLocation>
    <subcellularLocation>
        <location evidence="7">Host nucleus</location>
        <location evidence="7">Host nucleolus</location>
    </subcellularLocation>
    <subcellularLocation>
        <location evidence="1">Host cytoplasm</location>
        <location evidence="1">Host cytoskeleton</location>
    </subcellularLocation>
    <text evidence="1 7">TGB1 nuclear-cytoplasmic trafficking is required for cell-to-cell movement and systemic infection (PubMed:28872759). Associates with host microtubules (By similarity).</text>
</comment>
<comment type="miscellaneous">
    <text evidence="10">The genome of this virus consists of three linear, positive, single-stranded RNAs encapsidated in separate virions designated RNA-alpha, RNA-beta and RNA-gamma. Three proteins (alpha-A, beta-A and gamma-A) are translated directly from these genomic RNAs and the remaining proteins encoded on RNA-beta (beta-B, beta-C and beta-D) and RNA-gamma (gamma-B) are expressed via three subgenomic messenger RNAs.</text>
</comment>
<comment type="similarity">
    <text evidence="10">Belongs to the virgaviridae/benyvirus TGB1 movement protein family.</text>
</comment>
<feature type="chain" id="PRO_0000222491" description="Movement protein TGB1">
    <location>
        <begin position="1"/>
        <end position="528"/>
    </location>
</feature>
<feature type="repeat" description="1">
    <location>
        <begin position="52"/>
        <end position="77"/>
    </location>
</feature>
<feature type="repeat" description="2">
    <location>
        <begin position="78"/>
        <end position="103"/>
    </location>
</feature>
<feature type="domain" description="(+)RNA virus helicase ATP-binding">
    <location>
        <begin position="236"/>
        <end position="379"/>
    </location>
</feature>
<feature type="domain" description="(+)RNA virus helicase C-terminal">
    <location>
        <begin position="380"/>
        <end position="520"/>
    </location>
</feature>
<feature type="region of interest" description="Disordered" evidence="3">
    <location>
        <begin position="1"/>
        <end position="143"/>
    </location>
</feature>
<feature type="region of interest" description="2 X 26 AA tandem repeats">
    <location>
        <begin position="52"/>
        <end position="103"/>
    </location>
</feature>
<feature type="region of interest" description="Interaction with the suppressor of RNA silencing Gamma-B" evidence="8">
    <location>
        <begin position="75"/>
        <end position="491"/>
    </location>
</feature>
<feature type="region of interest" description="Nucleolar localization signal" evidence="7">
    <location>
        <begin position="111"/>
        <end position="120"/>
    </location>
</feature>
<feature type="region of interest" description="Nuclear localization signal" evidence="7">
    <location>
        <begin position="243"/>
        <end position="254"/>
    </location>
</feature>
<feature type="region of interest" description="Disordered" evidence="3">
    <location>
        <begin position="508"/>
        <end position="528"/>
    </location>
</feature>
<feature type="compositionally biased region" description="Basic and acidic residues" evidence="3">
    <location>
        <begin position="1"/>
        <end position="13"/>
    </location>
</feature>
<feature type="compositionally biased region" description="Basic residues" evidence="3">
    <location>
        <begin position="109"/>
        <end position="119"/>
    </location>
</feature>
<feature type="compositionally biased region" description="Basic and acidic residues" evidence="3">
    <location>
        <begin position="516"/>
        <end position="528"/>
    </location>
</feature>
<feature type="binding site" evidence="2">
    <location>
        <begin position="269"/>
        <end position="276"/>
    </location>
    <ligand>
        <name>ATP</name>
        <dbReference type="ChEBI" id="CHEBI:30616"/>
    </ligand>
</feature>
<keyword id="KW-0067">ATP-binding</keyword>
<keyword id="KW-0347">Helicase</keyword>
<keyword id="KW-1031">Host cell junction</keyword>
<keyword id="KW-1035">Host cytoplasm</keyword>
<keyword id="KW-1037">Host cytoskeleton</keyword>
<keyword id="KW-1048">Host nucleus</keyword>
<keyword id="KW-0378">Hydrolase</keyword>
<keyword id="KW-0547">Nucleotide-binding</keyword>
<keyword id="KW-1185">Reference proteome</keyword>
<keyword id="KW-0677">Repeat</keyword>
<keyword id="KW-0694">RNA-binding</keyword>
<keyword id="KW-0813">Transport</keyword>
<keyword id="KW-0916">Viral movement protein</keyword>
<evidence type="ECO:0000250" key="1">
    <source>
        <dbReference type="UniProtKB" id="Q9IV54"/>
    </source>
</evidence>
<evidence type="ECO:0000255" key="2"/>
<evidence type="ECO:0000256" key="3">
    <source>
        <dbReference type="SAM" id="MobiDB-lite"/>
    </source>
</evidence>
<evidence type="ECO:0000269" key="4">
    <source>
    </source>
</evidence>
<evidence type="ECO:0000269" key="5">
    <source>
    </source>
</evidence>
<evidence type="ECO:0000269" key="6">
    <source>
    </source>
</evidence>
<evidence type="ECO:0000269" key="7">
    <source>
    </source>
</evidence>
<evidence type="ECO:0000269" key="8">
    <source>
    </source>
</evidence>
<evidence type="ECO:0000269" key="9">
    <source>
    </source>
</evidence>
<evidence type="ECO:0000305" key="10"/>
<organism>
    <name type="scientific">Barley stripe mosaic virus</name>
    <name type="common">BSMV</name>
    <dbReference type="NCBI Taxonomy" id="12327"/>
    <lineage>
        <taxon>Viruses</taxon>
        <taxon>Riboviria</taxon>
        <taxon>Orthornavirae</taxon>
        <taxon>Kitrinoviricota</taxon>
        <taxon>Alsuviricetes</taxon>
        <taxon>Martellivirales</taxon>
        <taxon>Virgaviridae</taxon>
        <taxon>Hordeivirus</taxon>
    </lineage>
</organism>
<reference key="1">
    <citation type="journal article" date="1986" name="Nucleic Acids Res.">
        <title>The complete nucleotide sequence of RNA beta from the type strain of barley stripe mosaic virus.</title>
        <authorList>
            <person name="Gustafson G."/>
            <person name="Armour S.L."/>
        </authorList>
    </citation>
    <scope>NUCLEOTIDE SEQUENCE [GENOMIC RNA]</scope>
    <source>
        <strain>ATCC PV43</strain>
    </source>
</reference>
<reference key="2">
    <citation type="journal article" date="1997" name="J. Virol.">
        <title>The barley stripe mosaic virus 58-kilodalton beta(b) protein is a multifunctional RNA binding protein.</title>
        <authorList>
            <person name="Donald R.G."/>
            <person name="Lawrence D.M."/>
            <person name="Jackson A.O."/>
        </authorList>
    </citation>
    <scope>CATALYTIC ACTIVITY</scope>
    <scope>FUNCTION</scope>
</reference>
<reference key="3">
    <citation type="journal article" date="2002" name="Virology">
        <title>RNA helicase activity of the plant virus movement proteins encoded by the first gene of the triple gene block.</title>
        <authorList>
            <person name="Kalinina N.O."/>
            <person name="Rakitina D.V."/>
            <person name="Solovyev A.G."/>
            <person name="Schiemann J."/>
            <person name="Morozov S.Y."/>
        </authorList>
    </citation>
    <scope>FUNCTION</scope>
    <scope>CATALYTIC ACTIVITY</scope>
    <scope>COFACTOR</scope>
</reference>
<reference key="4">
    <citation type="journal article" date="2008" name="J. Virol.">
        <title>Triple gene block protein interactions involved in movement of Barley stripe mosaic virus.</title>
        <authorList>
            <person name="Lim H.S."/>
            <person name="Bragg J.N."/>
            <person name="Ganesan U."/>
            <person name="Lawrence D.M."/>
            <person name="Yu J."/>
            <person name="Isogai M."/>
            <person name="Hammond J."/>
            <person name="Jackson A.O."/>
        </authorList>
    </citation>
    <scope>INTERACTION WITH MOVEMENT PROTEIN TGB3</scope>
    <scope>FUNCTION</scope>
</reference>
<reference key="5">
    <citation type="journal article" date="2009" name="J. Virol.">
        <title>Subcellular localization of the barley stripe mosaic virus triple gene block proteins.</title>
        <authorList>
            <person name="Lim H.S."/>
            <person name="Bragg J.N."/>
            <person name="Ganesan U."/>
            <person name="Ruzin S."/>
            <person name="Schichnes D."/>
            <person name="Lee M.Y."/>
            <person name="Vaira A.M."/>
            <person name="Ryu K.H."/>
            <person name="Hammond J."/>
            <person name="Jackson A.O."/>
        </authorList>
    </citation>
    <scope>SUBUNIT</scope>
    <scope>SUBCELLULAR LOCATION</scope>
</reference>
<reference key="6">
    <citation type="journal article" date="2018" name="Mol. Plant Pathol.">
        <title>Hijacking of the nucleolar protein fibrillarin by TGB1 is required for cell-to-cell movement of Barley stripe mosaic virus.</title>
        <authorList>
            <person name="Li Z."/>
            <person name="Zhang Y."/>
            <person name="Jiang Z."/>
            <person name="Jin X."/>
            <person name="Zhang K."/>
            <person name="Wang X."/>
            <person name="Han C."/>
            <person name="Yu J."/>
            <person name="Li D."/>
        </authorList>
    </citation>
    <scope>SUBCELLULAR LOCATION</scope>
    <scope>NUCLEAR LOCALIZATION SIGNAL</scope>
</reference>
<reference key="7">
    <citation type="journal article" date="2020" name="PLoS Pathog.">
        <title>The Barley stripe mosaic virus gammab protein promotes viral cell-to-cell movement by enhancing ATPase-mediated assembly of ribonucleoprotein movement complexes.</title>
        <authorList>
            <person name="Jiang Z."/>
            <person name="Zhang K."/>
            <person name="Li Z."/>
            <person name="Li Z."/>
            <person name="Yang M."/>
            <person name="Jin X."/>
            <person name="Cao Q."/>
            <person name="Wang X."/>
            <person name="Yue N."/>
            <person name="Li D."/>
            <person name="Zhang Y."/>
        </authorList>
    </citation>
    <scope>IDENTIFICATION IN THE TGB1-TGB2-TGB3 COMPLEX</scope>
    <scope>ACTIVITY REGULATION</scope>
    <scope>INTERACTION WITH THE SUPPRESSOR OF RNA SILIECING GAMMA-B</scope>
    <scope>FUNCTION</scope>
</reference>
<proteinExistence type="evidence at protein level"/>
<protein>
    <recommendedName>
        <fullName>Movement protein TGB1</fullName>
        <ecNumber evidence="4 9">3.6.4.-</ecNumber>
    </recommendedName>
    <alternativeName>
        <fullName>58 kDa protein</fullName>
    </alternativeName>
    <alternativeName>
        <fullName>Beta-B protein</fullName>
    </alternativeName>
    <alternativeName>
        <fullName>Triple gene block 1 protein</fullName>
        <shortName>TGBp1</shortName>
    </alternativeName>
</protein>
<organismHost>
    <name type="scientific">Hordeum vulgare</name>
    <name type="common">Barley</name>
    <dbReference type="NCBI Taxonomy" id="4513"/>
</organismHost>
<organismHost>
    <name type="scientific">Triticum aestivum</name>
    <name type="common">Wheat</name>
    <dbReference type="NCBI Taxonomy" id="4565"/>
</organismHost>
<sequence>MDMTKTVEEKKTNGTDSVKGVFENSTIPKVPTGQEMGGDGSSTSKLKETLKVADQTPLSVDNGAKSKLDSSDRQVPGVADQTPLSVDNGAKSKLDSSDRQVPGPELKPNVKKSKKKRIQKPAQPSGPNDLKGGTKGSSQVGENVSENYTGISKEAAKQKQKTPKSVKMQSNLADKFKANDTRRSELINKFQQFVHETCLKSDFEYTGRQYFRARSNFFEMIKLASLYDKHLKECMARACTLERERLKRKLLLVRALKPAVDFLTGIISGVPGSGKSTIVRTLLKGEFPAVCALANPALMNDYSGIEGVYGLDDLLLSAVPITSDLLIIDEYTLAESAEILLLQRRLRASMVLLVGDVAQGKATTASSIEYLTLPVIYRSETTYRLGQETASLCSKQGNRMVSKGGRDTVIITDYDGETDETEKNIAFTVDTVRDVKDCGYDCALAIDVQGKEFDSVTLFLRNEDRKALADKHLRLVALSRHKSKLIIRADAEIRQAFLTGDIDLSSKASNSHRYSAKPDEDHSWFKAK</sequence>
<name>TGB1_BSMV</name>
<accession>P04867</accession>